<accession>Q00543</accession>
<accession>Q08H08</accession>
<proteinExistence type="inferred from homology"/>
<reference key="1">
    <citation type="journal article" date="1992" name="J. Mol. Evol.">
        <title>The complete mitochondrial DNA sequence of the harbor seal, Phoca vitulina.</title>
        <authorList>
            <person name="Arnason U."/>
            <person name="Johnsson E."/>
        </authorList>
    </citation>
    <scope>NUCLEOTIDE SEQUENCE [GENOMIC DNA]</scope>
</reference>
<reference key="2">
    <citation type="journal article" date="2006" name="Mol. Phylogenet. Evol.">
        <title>Pinniped phylogeny and a new hypothesis for their origin and dispersal.</title>
        <authorList>
            <person name="Arnason U."/>
            <person name="Gullberg A."/>
            <person name="Janke A."/>
            <person name="Kullberg M."/>
            <person name="Lehman N."/>
            <person name="Petrov E.A."/>
            <person name="Vainola R."/>
        </authorList>
    </citation>
    <scope>NUCLEOTIDE SEQUENCE [GENOMIC DNA]</scope>
</reference>
<protein>
    <recommendedName>
        <fullName>NADH-ubiquinone oxidoreductase chain 6</fullName>
        <ecNumber evidence="1">7.1.1.2</ecNumber>
    </recommendedName>
    <alternativeName>
        <fullName>NADH dehydrogenase subunit 6</fullName>
    </alternativeName>
</protein>
<feature type="chain" id="PRO_0000118315" description="NADH-ubiquinone oxidoreductase chain 6">
    <location>
        <begin position="1"/>
        <end position="175"/>
    </location>
</feature>
<feature type="transmembrane region" description="Helical" evidence="3">
    <location>
        <begin position="1"/>
        <end position="21"/>
    </location>
</feature>
<feature type="transmembrane region" description="Helical" evidence="3">
    <location>
        <begin position="25"/>
        <end position="45"/>
    </location>
</feature>
<feature type="transmembrane region" description="Helical" evidence="3">
    <location>
        <begin position="47"/>
        <end position="67"/>
    </location>
</feature>
<feature type="transmembrane region" description="Helical" evidence="3">
    <location>
        <begin position="88"/>
        <end position="108"/>
    </location>
</feature>
<feature type="transmembrane region" description="Helical" evidence="3">
    <location>
        <begin position="149"/>
        <end position="169"/>
    </location>
</feature>
<evidence type="ECO:0000250" key="1">
    <source>
        <dbReference type="UniProtKB" id="P03923"/>
    </source>
</evidence>
<evidence type="ECO:0000250" key="2">
    <source>
        <dbReference type="UniProtKB" id="P03924"/>
    </source>
</evidence>
<evidence type="ECO:0000255" key="3"/>
<evidence type="ECO:0000305" key="4"/>
<sequence length="175" mass="18891">MMTYIVFILSIIFVVSFVGFSSKPSPIYGGLVLIISGAVGCGIVLSFGGSFLGLMVFLIYLGGMLVVFGYTTAMAIEQYPEVWVSNKAVLGAFVMGLLSELLLACYILKDDEVDVVFEFNGMGDWVIYDTGDSGFFSEEAMGIAALYSYGTWLVIVTGWSLLTGVLVIMEVTRGN</sequence>
<keyword id="KW-0249">Electron transport</keyword>
<keyword id="KW-0472">Membrane</keyword>
<keyword id="KW-0496">Mitochondrion</keyword>
<keyword id="KW-0999">Mitochondrion inner membrane</keyword>
<keyword id="KW-0520">NAD</keyword>
<keyword id="KW-0679">Respiratory chain</keyword>
<keyword id="KW-1278">Translocase</keyword>
<keyword id="KW-0812">Transmembrane</keyword>
<keyword id="KW-1133">Transmembrane helix</keyword>
<keyword id="KW-0813">Transport</keyword>
<keyword id="KW-0830">Ubiquinone</keyword>
<organism>
    <name type="scientific">Phoca vitulina</name>
    <name type="common">Harbor seal</name>
    <dbReference type="NCBI Taxonomy" id="9720"/>
    <lineage>
        <taxon>Eukaryota</taxon>
        <taxon>Metazoa</taxon>
        <taxon>Chordata</taxon>
        <taxon>Craniata</taxon>
        <taxon>Vertebrata</taxon>
        <taxon>Euteleostomi</taxon>
        <taxon>Mammalia</taxon>
        <taxon>Eutheria</taxon>
        <taxon>Laurasiatheria</taxon>
        <taxon>Carnivora</taxon>
        <taxon>Caniformia</taxon>
        <taxon>Pinnipedia</taxon>
        <taxon>Phocidae</taxon>
        <taxon>Phocinae</taxon>
        <taxon>Phoca</taxon>
    </lineage>
</organism>
<geneLocation type="mitochondrion"/>
<comment type="function">
    <text evidence="1">Core subunit of the mitochondrial membrane respiratory chain NADH dehydrogenase (Complex I) which catalyzes electron transfer from NADH through the respiratory chain, using ubiquinone as an electron acceptor. Essential for the catalytic activity and assembly of complex I.</text>
</comment>
<comment type="catalytic activity">
    <reaction evidence="1">
        <text>a ubiquinone + NADH + 5 H(+)(in) = a ubiquinol + NAD(+) + 4 H(+)(out)</text>
        <dbReference type="Rhea" id="RHEA:29091"/>
        <dbReference type="Rhea" id="RHEA-COMP:9565"/>
        <dbReference type="Rhea" id="RHEA-COMP:9566"/>
        <dbReference type="ChEBI" id="CHEBI:15378"/>
        <dbReference type="ChEBI" id="CHEBI:16389"/>
        <dbReference type="ChEBI" id="CHEBI:17976"/>
        <dbReference type="ChEBI" id="CHEBI:57540"/>
        <dbReference type="ChEBI" id="CHEBI:57945"/>
        <dbReference type="EC" id="7.1.1.2"/>
    </reaction>
</comment>
<comment type="subunit">
    <text evidence="2">Core subunit of respiratory chain NADH dehydrogenase (Complex I) which is composed of 45 different subunits.</text>
</comment>
<comment type="subcellular location">
    <subcellularLocation>
        <location evidence="2">Mitochondrion inner membrane</location>
        <topology evidence="3">Multi-pass membrane protein</topology>
    </subcellularLocation>
</comment>
<comment type="similarity">
    <text evidence="4">Belongs to the complex I subunit 6 family.</text>
</comment>
<name>NU6M_PHOVI</name>
<gene>
    <name type="primary">MT-ND6</name>
    <name type="synonym">MTND6</name>
    <name type="synonym">NADH6</name>
    <name type="synonym">ND6</name>
</gene>
<dbReference type="EC" id="7.1.1.2" evidence="1"/>
<dbReference type="EMBL" id="X63726">
    <property type="protein sequence ID" value="CAA45268.1"/>
    <property type="molecule type" value="Genomic_DNA"/>
</dbReference>
<dbReference type="EMBL" id="AM181032">
    <property type="protein sequence ID" value="CAJ57090.1"/>
    <property type="molecule type" value="Genomic_DNA"/>
</dbReference>
<dbReference type="PIR" id="S26162">
    <property type="entry name" value="S26162"/>
</dbReference>
<dbReference type="RefSeq" id="NP_006939.1">
    <property type="nucleotide sequence ID" value="NC_001325.1"/>
</dbReference>
<dbReference type="SMR" id="Q00543"/>
<dbReference type="GeneID" id="807658"/>
<dbReference type="CTD" id="4541"/>
<dbReference type="OrthoDB" id="25962at33554"/>
<dbReference type="GO" id="GO:0005743">
    <property type="term" value="C:mitochondrial inner membrane"/>
    <property type="evidence" value="ECO:0000250"/>
    <property type="project" value="UniProtKB"/>
</dbReference>
<dbReference type="GO" id="GO:0008137">
    <property type="term" value="F:NADH dehydrogenase (ubiquinone) activity"/>
    <property type="evidence" value="ECO:0000250"/>
    <property type="project" value="UniProtKB"/>
</dbReference>
<dbReference type="GO" id="GO:0006120">
    <property type="term" value="P:mitochondrial electron transport, NADH to ubiquinone"/>
    <property type="evidence" value="ECO:0000250"/>
    <property type="project" value="UniProtKB"/>
</dbReference>
<dbReference type="GO" id="GO:0032981">
    <property type="term" value="P:mitochondrial respiratory chain complex I assembly"/>
    <property type="evidence" value="ECO:0000250"/>
    <property type="project" value="UniProtKB"/>
</dbReference>
<dbReference type="Gene3D" id="1.20.120.1200">
    <property type="entry name" value="NADH-ubiquinone/plastoquinone oxidoreductase chain 6, subunit NuoJ"/>
    <property type="match status" value="1"/>
</dbReference>
<dbReference type="InterPro" id="IPR050269">
    <property type="entry name" value="ComplexI_Subunit6"/>
</dbReference>
<dbReference type="InterPro" id="IPR001457">
    <property type="entry name" value="NADH_UbQ/plastoQ_OxRdtase_su6"/>
</dbReference>
<dbReference type="InterPro" id="IPR042106">
    <property type="entry name" value="Nuo/plastoQ_OxRdtase_6_NuoJ"/>
</dbReference>
<dbReference type="PANTHER" id="PTHR11435">
    <property type="entry name" value="NADH UBIQUINONE OXIDOREDUCTASE SUBUNIT ND6"/>
    <property type="match status" value="1"/>
</dbReference>
<dbReference type="PANTHER" id="PTHR11435:SF1">
    <property type="entry name" value="NADH-UBIQUINONE OXIDOREDUCTASE CHAIN 6"/>
    <property type="match status" value="1"/>
</dbReference>
<dbReference type="Pfam" id="PF00499">
    <property type="entry name" value="Oxidored_q3"/>
    <property type="match status" value="1"/>
</dbReference>